<sequence>METDGRLKAYKFVAYAAVGFSIAAVASVLLTLPMVYSYVSHVRQQMHHEINFCKGSAKDIFAEVNYMKANAGPVPPRNRTTRQAYGGPEVNPAPNLQCEGCCLPGPPGPAGAPGKPGKPGRPGAPGTPGTPGKPPVAPCEPTTPPPCKPCPQGPPGPPGPPGAPGDPGEAGTPGRPGTDAAPGSPGPRGPPGPAGEAGAPGPAGEPGTPAISEPLTPGAPGEPGDSGPPGPPGPPGAPGNDGPPGPPGPKGAPGPDGPPGVDGQSGPPGPPGPAGTPGEKGICPKYCALDGGVFFEDGTRR</sequence>
<reference key="1">
    <citation type="journal article" date="1982" name="Cell">
        <title>Comparisons of the complete sequences of two collagen genes from Caenorhabditis elegans.</title>
        <authorList>
            <person name="Kramer J.M."/>
            <person name="Cox G.N."/>
            <person name="Hirsh D."/>
        </authorList>
    </citation>
    <scope>NUCLEOTIDE SEQUENCE [GENOMIC DNA]</scope>
    <source>
        <strain>Bristol N2</strain>
    </source>
</reference>
<reference key="2">
    <citation type="journal article" date="1985" name="J. Biol. Chem.">
        <title>Expression of the Caenorhabditis elegans collagen genes col-1 and col-2 is developmentally regulated.</title>
        <authorList>
            <person name="Kramer J.M."/>
            <person name="Cox G.N."/>
            <person name="Hirsh D."/>
        </authorList>
    </citation>
    <scope>NUCLEOTIDE SEQUENCE [GENOMIC DNA]</scope>
    <source>
        <strain>Bristol N2</strain>
    </source>
</reference>
<reference key="3">
    <citation type="journal article" date="1998" name="Science">
        <title>Genome sequence of the nematode C. elegans: a platform for investigating biology.</title>
        <authorList>
            <consortium name="The C. elegans sequencing consortium"/>
        </authorList>
    </citation>
    <scope>NUCLEOTIDE SEQUENCE [LARGE SCALE GENOMIC DNA]</scope>
    <source>
        <strain>Bristol N2</strain>
    </source>
</reference>
<reference key="4">
    <citation type="journal article" date="2004" name="Genetics">
        <title>Gene interactions in Caenorhabditis elegans define DPY-31 as a candidate procollagen C-proteinase and SQT-3/ROL-4 as its predicted major target.</title>
        <authorList>
            <person name="Novelli J."/>
            <person name="Ahmed S."/>
            <person name="Hodgkin J."/>
        </authorList>
    </citation>
    <scope>MUTAGENESIS OF ALA-288; ASP-290; GLY-291; ASP-297 AND THR-299</scope>
</reference>
<reference key="5">
    <citation type="journal article" date="2023" name="PLoS Genet.">
        <title>The proprotein convertase BLI-4 promotes collagen secretion prior to assembly of the Caenorhabditis elegans cuticle.</title>
        <authorList>
            <person name="Birnbaum S.K."/>
            <person name="Cohen J.D."/>
            <person name="Belfi A."/>
            <person name="Murray J.I."/>
            <person name="Adams J.R.G."/>
            <person name="Chisholm A.D."/>
            <person name="Sundaram M.V."/>
        </authorList>
    </citation>
    <scope>FUNCTION</scope>
    <scope>SUBCELLULAR LOCATION</scope>
    <scope>MUTAGENESIS OF 79-ARG--ARG-82</scope>
</reference>
<proteinExistence type="evidence at protein level"/>
<keyword id="KW-0176">Collagen</keyword>
<keyword id="KW-0193">Cuticle</keyword>
<keyword id="KW-1015">Disulfide bond</keyword>
<keyword id="KW-1185">Reference proteome</keyword>
<keyword id="KW-0677">Repeat</keyword>
<keyword id="KW-0964">Secreted</keyword>
<keyword id="KW-0732">Signal</keyword>
<evidence type="ECO:0000255" key="1"/>
<evidence type="ECO:0000256" key="2">
    <source>
        <dbReference type="SAM" id="MobiDB-lite"/>
    </source>
</evidence>
<evidence type="ECO:0000269" key="3">
    <source>
    </source>
</evidence>
<evidence type="ECO:0000269" key="4">
    <source>
    </source>
</evidence>
<evidence type="ECO:0000303" key="5">
    <source>
    </source>
</evidence>
<evidence type="ECO:0000303" key="6">
    <source>
    </source>
</evidence>
<evidence type="ECO:0000305" key="7"/>
<feature type="signal peptide" evidence="1">
    <location>
        <begin position="1"/>
        <end position="37"/>
    </location>
</feature>
<feature type="chain" id="PRO_0000006420" description="Cuticle collagen 1">
    <location>
        <begin position="38"/>
        <end position="301"/>
    </location>
</feature>
<feature type="region of interest" description="Furin-like endopeptidase recognition region" evidence="6">
    <location>
        <begin position="79"/>
        <end position="82"/>
    </location>
</feature>
<feature type="region of interest" description="Triple-helical region">
    <location>
        <begin position="105"/>
        <end position="134"/>
    </location>
</feature>
<feature type="region of interest" description="Disordered" evidence="2">
    <location>
        <begin position="109"/>
        <end position="284"/>
    </location>
</feature>
<feature type="region of interest" description="Triple-helical region">
    <location>
        <begin position="153"/>
        <end position="179"/>
    </location>
</feature>
<feature type="region of interest" description="Triple-helical region">
    <location>
        <begin position="183"/>
        <end position="209"/>
    </location>
</feature>
<feature type="region of interest" description="Triple-helical region">
    <location>
        <begin position="218"/>
        <end position="283"/>
    </location>
</feature>
<feature type="compositionally biased region" description="Pro residues" evidence="2">
    <location>
        <begin position="131"/>
        <end position="164"/>
    </location>
</feature>
<feature type="compositionally biased region" description="Pro residues" evidence="2">
    <location>
        <begin position="184"/>
        <end position="193"/>
    </location>
</feature>
<feature type="compositionally biased region" description="Low complexity" evidence="2">
    <location>
        <begin position="194"/>
        <end position="210"/>
    </location>
</feature>
<feature type="compositionally biased region" description="Pro residues" evidence="2">
    <location>
        <begin position="226"/>
        <end position="258"/>
    </location>
</feature>
<feature type="site" description="Cleavage; by dpy-31" evidence="5">
    <location>
        <begin position="289"/>
        <end position="290"/>
    </location>
</feature>
<feature type="mutagenesis site" description="Forms large puncta; fails to secrete and incorporate into the cuticle." evidence="4">
    <original>RTTR</original>
    <variation>ATTA</variation>
    <location>
        <begin position="79"/>
        <end position="82"/>
    </location>
</feature>
<feature type="mutagenesis site" description="In e2809, e2889 and e2896; abnormal left-twisted body." evidence="3">
    <original>A</original>
    <variation>V</variation>
    <location>
        <position position="288"/>
    </location>
</feature>
<feature type="mutagenesis site" description="In 2901; abnormal left-handed rolling." evidence="3">
    <original>D</original>
    <variation>G</variation>
    <location>
        <position position="290"/>
    </location>
</feature>
<feature type="mutagenesis site" description="In e2888, e2890 and sc8; abnormal left-twisted body. At the restrictive temperature of 25 degrees Celsius, lethal in a dpy-31 (ju345) mutant background." evidence="3">
    <original>G</original>
    <variation>E</variation>
    <location>
        <position position="291"/>
    </location>
</feature>
<feature type="mutagenesis site" description="In e2911; slightly shorter and stouter." evidence="3">
    <original>D</original>
    <variation>G</variation>
    <location>
        <position position="297"/>
    </location>
</feature>
<feature type="mutagenesis site" description="In e2906; temperature sensitive mutant. At the restrictive temperature of 15 degrees Celsius, lethal at the embryonic or early larval stages. At the permissive temperature of 25 degrees Celsius, slightly shorter and stouter." evidence="3">
    <original>T</original>
    <variation>A</variation>
    <location>
        <position position="299"/>
    </location>
</feature>
<feature type="sequence conflict" description="In Ref. 1; CAA23463 and 2; AAA27988." evidence="7" ref="1 2">
    <location>
        <begin position="57"/>
        <end position="61"/>
    </location>
</feature>
<feature type="sequence conflict" description="In Ref. 1; CAA23463 and 2; AAA27988." evidence="7" ref="1 2">
    <original>V</original>
    <variation>A</variation>
    <location>
        <position position="261"/>
    </location>
</feature>
<name>COL1_CAEEL</name>
<dbReference type="EMBL" id="V00147">
    <property type="protein sequence ID" value="CAA23463.1"/>
    <property type="molecule type" value="Genomic_DNA"/>
</dbReference>
<dbReference type="EMBL" id="J01047">
    <property type="protein sequence ID" value="AAA27988.1"/>
    <property type="molecule type" value="Genomic_DNA"/>
</dbReference>
<dbReference type="EMBL" id="Z74472">
    <property type="protein sequence ID" value="CAA98942.1"/>
    <property type="molecule type" value="Genomic_DNA"/>
</dbReference>
<dbReference type="PIR" id="A31219">
    <property type="entry name" value="A31219"/>
</dbReference>
<dbReference type="PIR" id="T21314">
    <property type="entry name" value="T21314"/>
</dbReference>
<dbReference type="RefSeq" id="NP_001256412.1">
    <property type="nucleotide sequence ID" value="NM_001269483.3"/>
</dbReference>
<dbReference type="SMR" id="P08124"/>
<dbReference type="BioGRID" id="44716">
    <property type="interactions" value="4"/>
</dbReference>
<dbReference type="FunCoup" id="P08124">
    <property type="interactions" value="7"/>
</dbReference>
<dbReference type="STRING" id="6239.F23H12.4a.1"/>
<dbReference type="PaxDb" id="6239-F23H12.4a"/>
<dbReference type="PeptideAtlas" id="P08124"/>
<dbReference type="EnsemblMetazoa" id="F23H12.4a.1">
    <property type="protein sequence ID" value="F23H12.4a.1"/>
    <property type="gene ID" value="WBGene00005018"/>
</dbReference>
<dbReference type="GeneID" id="179693"/>
<dbReference type="KEGG" id="cel:CELE_F23H12.4"/>
<dbReference type="UCSC" id="F23H12.4">
    <property type="organism name" value="c. elegans"/>
</dbReference>
<dbReference type="AGR" id="WB:WBGene00005018"/>
<dbReference type="CTD" id="179693"/>
<dbReference type="WormBase" id="F23H12.4a">
    <property type="protein sequence ID" value="CE05707"/>
    <property type="gene ID" value="WBGene00005018"/>
    <property type="gene designation" value="sqt-3"/>
</dbReference>
<dbReference type="eggNOG" id="KOG3544">
    <property type="taxonomic scope" value="Eukaryota"/>
</dbReference>
<dbReference type="GeneTree" id="ENSGT00970000195912"/>
<dbReference type="InParanoid" id="P08124"/>
<dbReference type="OMA" id="FMKANSG"/>
<dbReference type="OrthoDB" id="5920752at2759"/>
<dbReference type="PhylomeDB" id="P08124"/>
<dbReference type="PRO" id="PR:P08124"/>
<dbReference type="Proteomes" id="UP000001940">
    <property type="component" value="Chromosome V"/>
</dbReference>
<dbReference type="Bgee" id="WBGene00005018">
    <property type="expression patterns" value="Expressed in pharyngeal muscle cell (C elegans) and 4 other cell types or tissues"/>
</dbReference>
<dbReference type="ExpressionAtlas" id="P08124">
    <property type="expression patterns" value="baseline and differential"/>
</dbReference>
<dbReference type="GO" id="GO:0005581">
    <property type="term" value="C:collagen trimer"/>
    <property type="evidence" value="ECO:0007669"/>
    <property type="project" value="UniProtKB-KW"/>
</dbReference>
<dbReference type="GO" id="GO:0060102">
    <property type="term" value="C:cuticular extracellular matrix"/>
    <property type="evidence" value="ECO:0000314"/>
    <property type="project" value="WormBase"/>
</dbReference>
<dbReference type="GO" id="GO:0005576">
    <property type="term" value="C:extracellular region"/>
    <property type="evidence" value="ECO:0000303"/>
    <property type="project" value="UniProtKB"/>
</dbReference>
<dbReference type="GO" id="GO:0042302">
    <property type="term" value="F:structural constituent of cuticle"/>
    <property type="evidence" value="ECO:0000303"/>
    <property type="project" value="UniProtKB"/>
</dbReference>
<dbReference type="GO" id="GO:0040002">
    <property type="term" value="P:collagen and cuticulin-based cuticle development"/>
    <property type="evidence" value="ECO:0000315"/>
    <property type="project" value="WormBase"/>
</dbReference>
<dbReference type="GO" id="GO:0042338">
    <property type="term" value="P:cuticle development involved in collagen and cuticulin-based cuticle molting cycle"/>
    <property type="evidence" value="ECO:0000315"/>
    <property type="project" value="WormBase"/>
</dbReference>
<dbReference type="InterPro" id="IPR002486">
    <property type="entry name" value="Col_cuticle_N"/>
</dbReference>
<dbReference type="InterPro" id="IPR008160">
    <property type="entry name" value="Collagen"/>
</dbReference>
<dbReference type="PANTHER" id="PTHR24637">
    <property type="entry name" value="COLLAGEN"/>
    <property type="match status" value="1"/>
</dbReference>
<dbReference type="PANTHER" id="PTHR24637:SF237">
    <property type="entry name" value="CUTICLE COLLAGEN 1"/>
    <property type="match status" value="1"/>
</dbReference>
<dbReference type="Pfam" id="PF01484">
    <property type="entry name" value="Col_cuticle_N"/>
    <property type="match status" value="1"/>
</dbReference>
<dbReference type="Pfam" id="PF01391">
    <property type="entry name" value="Collagen"/>
    <property type="match status" value="2"/>
</dbReference>
<dbReference type="SMART" id="SM01088">
    <property type="entry name" value="Col_cuticle_N"/>
    <property type="match status" value="1"/>
</dbReference>
<comment type="function">
    <text evidence="4">Secreted collagen that forms part of the nematode cuticle, which functions as an exoskeleton and a barrier to protect the worm from its environment (PubMed:37721936). Secretion and subsequent incorporation into the cuticle is likely mediated by bli-4, which probably cleaves at the N-terminal consensus furin cleavage site (PubMed:37721936).</text>
</comment>
<comment type="subunit">
    <text>Collagen polypeptide chains are complexed within the cuticle by disulfide bonds and other types of covalent cross-links.</text>
</comment>
<comment type="subcellular location">
    <subcellularLocation>
        <location>Secreted</location>
    </subcellularLocation>
    <subcellularLocation>
        <location evidence="4">Secreted</location>
        <location evidence="4">Extracellular space</location>
    </subcellularLocation>
</comment>
<comment type="similarity">
    <text evidence="7">Belongs to the cuticular collagen family.</text>
</comment>
<protein>
    <recommendedName>
        <fullName>Cuticle collagen 1</fullName>
    </recommendedName>
    <alternativeName>
        <fullName>Protein dumpy-15</fullName>
    </alternativeName>
    <alternativeName>
        <fullName>Protein squat-3</fullName>
    </alternativeName>
</protein>
<organism>
    <name type="scientific">Caenorhabditis elegans</name>
    <dbReference type="NCBI Taxonomy" id="6239"/>
    <lineage>
        <taxon>Eukaryota</taxon>
        <taxon>Metazoa</taxon>
        <taxon>Ecdysozoa</taxon>
        <taxon>Nematoda</taxon>
        <taxon>Chromadorea</taxon>
        <taxon>Rhabditida</taxon>
        <taxon>Rhabditina</taxon>
        <taxon>Rhabditomorpha</taxon>
        <taxon>Rhabditoidea</taxon>
        <taxon>Rhabditidae</taxon>
        <taxon>Peloderinae</taxon>
        <taxon>Caenorhabditis</taxon>
    </lineage>
</organism>
<gene>
    <name type="primary">sqt-3</name>
    <name type="synonym">col-1</name>
    <name type="synonym">dpy-15</name>
    <name type="ORF">F23H12.4</name>
</gene>
<accession>P08124</accession>
<accession>Q19763</accession>